<dbReference type="EC" id="3.1.3.5" evidence="1"/>
<dbReference type="EMBL" id="AL111168">
    <property type="protein sequence ID" value="CAL34444.1"/>
    <property type="molecule type" value="Genomic_DNA"/>
</dbReference>
<dbReference type="PIR" id="A81448">
    <property type="entry name" value="A81448"/>
</dbReference>
<dbReference type="RefSeq" id="WP_002854555.1">
    <property type="nucleotide sequence ID" value="NZ_SZUC01000004.1"/>
</dbReference>
<dbReference type="RefSeq" id="YP_002343731.1">
    <property type="nucleotide sequence ID" value="NC_002163.1"/>
</dbReference>
<dbReference type="SMR" id="Q9PIK6"/>
<dbReference type="IntAct" id="Q9PIK6">
    <property type="interactions" value="10"/>
</dbReference>
<dbReference type="STRING" id="192222.Cj0293"/>
<dbReference type="PaxDb" id="192222-Cj0293"/>
<dbReference type="EnsemblBacteria" id="CAL34444">
    <property type="protein sequence ID" value="CAL34444"/>
    <property type="gene ID" value="Cj0293"/>
</dbReference>
<dbReference type="GeneID" id="904617"/>
<dbReference type="KEGG" id="cje:Cj0293"/>
<dbReference type="PATRIC" id="fig|192222.6.peg.285"/>
<dbReference type="eggNOG" id="COG0496">
    <property type="taxonomic scope" value="Bacteria"/>
</dbReference>
<dbReference type="HOGENOM" id="CLU_045192_1_2_7"/>
<dbReference type="OrthoDB" id="9780815at2"/>
<dbReference type="PRO" id="PR:Q9PIK6"/>
<dbReference type="Proteomes" id="UP000000799">
    <property type="component" value="Chromosome"/>
</dbReference>
<dbReference type="GO" id="GO:0005737">
    <property type="term" value="C:cytoplasm"/>
    <property type="evidence" value="ECO:0007669"/>
    <property type="project" value="UniProtKB-SubCell"/>
</dbReference>
<dbReference type="GO" id="GO:0008254">
    <property type="term" value="F:3'-nucleotidase activity"/>
    <property type="evidence" value="ECO:0007669"/>
    <property type="project" value="TreeGrafter"/>
</dbReference>
<dbReference type="GO" id="GO:0008253">
    <property type="term" value="F:5'-nucleotidase activity"/>
    <property type="evidence" value="ECO:0007669"/>
    <property type="project" value="UniProtKB-UniRule"/>
</dbReference>
<dbReference type="GO" id="GO:0004309">
    <property type="term" value="F:exopolyphosphatase activity"/>
    <property type="evidence" value="ECO:0007669"/>
    <property type="project" value="TreeGrafter"/>
</dbReference>
<dbReference type="GO" id="GO:0046872">
    <property type="term" value="F:metal ion binding"/>
    <property type="evidence" value="ECO:0007669"/>
    <property type="project" value="UniProtKB-UniRule"/>
</dbReference>
<dbReference type="GO" id="GO:0000166">
    <property type="term" value="F:nucleotide binding"/>
    <property type="evidence" value="ECO:0007669"/>
    <property type="project" value="UniProtKB-KW"/>
</dbReference>
<dbReference type="FunFam" id="3.40.1210.10:FF:000001">
    <property type="entry name" value="5'/3'-nucleotidase SurE"/>
    <property type="match status" value="1"/>
</dbReference>
<dbReference type="Gene3D" id="3.40.1210.10">
    <property type="entry name" value="Survival protein SurE-like phosphatase/nucleotidase"/>
    <property type="match status" value="1"/>
</dbReference>
<dbReference type="HAMAP" id="MF_00060">
    <property type="entry name" value="SurE"/>
    <property type="match status" value="1"/>
</dbReference>
<dbReference type="InterPro" id="IPR030048">
    <property type="entry name" value="SurE"/>
</dbReference>
<dbReference type="InterPro" id="IPR002828">
    <property type="entry name" value="SurE-like_Pase/nucleotidase"/>
</dbReference>
<dbReference type="InterPro" id="IPR036523">
    <property type="entry name" value="SurE-like_sf"/>
</dbReference>
<dbReference type="NCBIfam" id="NF001490">
    <property type="entry name" value="PRK00346.1-4"/>
    <property type="match status" value="1"/>
</dbReference>
<dbReference type="NCBIfam" id="NF001494">
    <property type="entry name" value="PRK00346.2-4"/>
    <property type="match status" value="1"/>
</dbReference>
<dbReference type="NCBIfam" id="TIGR00087">
    <property type="entry name" value="surE"/>
    <property type="match status" value="1"/>
</dbReference>
<dbReference type="PANTHER" id="PTHR30457">
    <property type="entry name" value="5'-NUCLEOTIDASE SURE"/>
    <property type="match status" value="1"/>
</dbReference>
<dbReference type="PANTHER" id="PTHR30457:SF12">
    <property type="entry name" value="5'_3'-NUCLEOTIDASE SURE"/>
    <property type="match status" value="1"/>
</dbReference>
<dbReference type="Pfam" id="PF01975">
    <property type="entry name" value="SurE"/>
    <property type="match status" value="1"/>
</dbReference>
<dbReference type="SUPFAM" id="SSF64167">
    <property type="entry name" value="SurE-like"/>
    <property type="match status" value="1"/>
</dbReference>
<feature type="chain" id="PRO_0000111796" description="5'-nucleotidase SurE">
    <location>
        <begin position="1"/>
        <end position="258"/>
    </location>
</feature>
<feature type="binding site" evidence="1">
    <location>
        <position position="9"/>
    </location>
    <ligand>
        <name>a divalent metal cation</name>
        <dbReference type="ChEBI" id="CHEBI:60240"/>
    </ligand>
</feature>
<feature type="binding site" evidence="1">
    <location>
        <position position="10"/>
    </location>
    <ligand>
        <name>a divalent metal cation</name>
        <dbReference type="ChEBI" id="CHEBI:60240"/>
    </ligand>
</feature>
<feature type="binding site" evidence="1">
    <location>
        <position position="42"/>
    </location>
    <ligand>
        <name>a divalent metal cation</name>
        <dbReference type="ChEBI" id="CHEBI:60240"/>
    </ligand>
</feature>
<feature type="binding site" evidence="1">
    <location>
        <position position="96"/>
    </location>
    <ligand>
        <name>a divalent metal cation</name>
        <dbReference type="ChEBI" id="CHEBI:60240"/>
    </ligand>
</feature>
<keyword id="KW-0963">Cytoplasm</keyword>
<keyword id="KW-0378">Hydrolase</keyword>
<keyword id="KW-0479">Metal-binding</keyword>
<keyword id="KW-0547">Nucleotide-binding</keyword>
<keyword id="KW-1185">Reference proteome</keyword>
<reference key="1">
    <citation type="journal article" date="2000" name="Nature">
        <title>The genome sequence of the food-borne pathogen Campylobacter jejuni reveals hypervariable sequences.</title>
        <authorList>
            <person name="Parkhill J."/>
            <person name="Wren B.W."/>
            <person name="Mungall K.L."/>
            <person name="Ketley J.M."/>
            <person name="Churcher C.M."/>
            <person name="Basham D."/>
            <person name="Chillingworth T."/>
            <person name="Davies R.M."/>
            <person name="Feltwell T."/>
            <person name="Holroyd S."/>
            <person name="Jagels K."/>
            <person name="Karlyshev A.V."/>
            <person name="Moule S."/>
            <person name="Pallen M.J."/>
            <person name="Penn C.W."/>
            <person name="Quail M.A."/>
            <person name="Rajandream M.A."/>
            <person name="Rutherford K.M."/>
            <person name="van Vliet A.H.M."/>
            <person name="Whitehead S."/>
            <person name="Barrell B.G."/>
        </authorList>
    </citation>
    <scope>NUCLEOTIDE SEQUENCE [LARGE SCALE GENOMIC DNA]</scope>
    <source>
        <strain>ATCC 700819 / NCTC 11168</strain>
    </source>
</reference>
<sequence>MKEILITNDDGYESEGLKKLIKMLTKEFKAKITIVAPASEKSACSHSITLTKPLRFVKVGKRFYKLDDGTPADCVYLALHALYKKRLPDLVISGINKGANVGEDITYSGTCAGAMEAVLQGIPAIALSQFYKKSEKELDYKNALQITKKIIQNIFDKGFPLEKKEFLNINFPAKSKIKGIKICKAGKRVYNFEAHSNVNPRGVEYYWLAAANLDFEDEKNSDIALLKKGYATITPIMLDLTAYERMKKVKKWLKANDE</sequence>
<gene>
    <name evidence="1" type="primary">surE</name>
    <name type="ordered locus">Cj0293</name>
</gene>
<protein>
    <recommendedName>
        <fullName evidence="1">5'-nucleotidase SurE</fullName>
        <ecNumber evidence="1">3.1.3.5</ecNumber>
    </recommendedName>
    <alternativeName>
        <fullName evidence="1">Nucleoside 5'-monophosphate phosphohydrolase</fullName>
    </alternativeName>
</protein>
<accession>Q9PIK6</accession>
<accession>Q0PBL6</accession>
<proteinExistence type="inferred from homology"/>
<organism>
    <name type="scientific">Campylobacter jejuni subsp. jejuni serotype O:2 (strain ATCC 700819 / NCTC 11168)</name>
    <dbReference type="NCBI Taxonomy" id="192222"/>
    <lineage>
        <taxon>Bacteria</taxon>
        <taxon>Pseudomonadati</taxon>
        <taxon>Campylobacterota</taxon>
        <taxon>Epsilonproteobacteria</taxon>
        <taxon>Campylobacterales</taxon>
        <taxon>Campylobacteraceae</taxon>
        <taxon>Campylobacter</taxon>
    </lineage>
</organism>
<evidence type="ECO:0000255" key="1">
    <source>
        <dbReference type="HAMAP-Rule" id="MF_00060"/>
    </source>
</evidence>
<name>SURE_CAMJE</name>
<comment type="function">
    <text evidence="1">Nucleotidase that shows phosphatase activity on nucleoside 5'-monophosphates.</text>
</comment>
<comment type="catalytic activity">
    <reaction evidence="1">
        <text>a ribonucleoside 5'-phosphate + H2O = a ribonucleoside + phosphate</text>
        <dbReference type="Rhea" id="RHEA:12484"/>
        <dbReference type="ChEBI" id="CHEBI:15377"/>
        <dbReference type="ChEBI" id="CHEBI:18254"/>
        <dbReference type="ChEBI" id="CHEBI:43474"/>
        <dbReference type="ChEBI" id="CHEBI:58043"/>
        <dbReference type="EC" id="3.1.3.5"/>
    </reaction>
</comment>
<comment type="cofactor">
    <cofactor evidence="1">
        <name>a divalent metal cation</name>
        <dbReference type="ChEBI" id="CHEBI:60240"/>
    </cofactor>
    <text evidence="1">Binds 1 divalent metal cation per subunit.</text>
</comment>
<comment type="subcellular location">
    <subcellularLocation>
        <location evidence="1">Cytoplasm</location>
    </subcellularLocation>
</comment>
<comment type="similarity">
    <text evidence="1">Belongs to the SurE nucleotidase family.</text>
</comment>